<organism>
    <name type="scientific">Listeria innocua serovar 6a (strain ATCC BAA-680 / CLIP 11262)</name>
    <dbReference type="NCBI Taxonomy" id="272626"/>
    <lineage>
        <taxon>Bacteria</taxon>
        <taxon>Bacillati</taxon>
        <taxon>Bacillota</taxon>
        <taxon>Bacilli</taxon>
        <taxon>Bacillales</taxon>
        <taxon>Listeriaceae</taxon>
        <taxon>Listeria</taxon>
    </lineage>
</organism>
<dbReference type="EC" id="1.5.1.5" evidence="1"/>
<dbReference type="EC" id="3.5.4.9" evidence="1"/>
<dbReference type="EMBL" id="AL596168">
    <property type="protein sequence ID" value="CAC96628.1"/>
    <property type="molecule type" value="Genomic_DNA"/>
</dbReference>
<dbReference type="PIR" id="AD1607">
    <property type="entry name" value="AD1607"/>
</dbReference>
<dbReference type="RefSeq" id="WP_003771725.1">
    <property type="nucleotide sequence ID" value="NC_003212.1"/>
</dbReference>
<dbReference type="SMR" id="Q92BZ4"/>
<dbReference type="STRING" id="272626.gene:17565728"/>
<dbReference type="GeneID" id="93234777"/>
<dbReference type="KEGG" id="lin:folD"/>
<dbReference type="eggNOG" id="COG0190">
    <property type="taxonomic scope" value="Bacteria"/>
</dbReference>
<dbReference type="HOGENOM" id="CLU_034045_2_1_9"/>
<dbReference type="OrthoDB" id="9803580at2"/>
<dbReference type="UniPathway" id="UPA00193"/>
<dbReference type="Proteomes" id="UP000002513">
    <property type="component" value="Chromosome"/>
</dbReference>
<dbReference type="GO" id="GO:0005829">
    <property type="term" value="C:cytosol"/>
    <property type="evidence" value="ECO:0007669"/>
    <property type="project" value="TreeGrafter"/>
</dbReference>
<dbReference type="GO" id="GO:0004477">
    <property type="term" value="F:methenyltetrahydrofolate cyclohydrolase activity"/>
    <property type="evidence" value="ECO:0007669"/>
    <property type="project" value="UniProtKB-UniRule"/>
</dbReference>
<dbReference type="GO" id="GO:0004488">
    <property type="term" value="F:methylenetetrahydrofolate dehydrogenase (NADP+) activity"/>
    <property type="evidence" value="ECO:0007669"/>
    <property type="project" value="UniProtKB-UniRule"/>
</dbReference>
<dbReference type="GO" id="GO:0000105">
    <property type="term" value="P:L-histidine biosynthetic process"/>
    <property type="evidence" value="ECO:0007669"/>
    <property type="project" value="UniProtKB-KW"/>
</dbReference>
<dbReference type="GO" id="GO:0009086">
    <property type="term" value="P:methionine biosynthetic process"/>
    <property type="evidence" value="ECO:0007669"/>
    <property type="project" value="UniProtKB-KW"/>
</dbReference>
<dbReference type="GO" id="GO:0006164">
    <property type="term" value="P:purine nucleotide biosynthetic process"/>
    <property type="evidence" value="ECO:0007669"/>
    <property type="project" value="UniProtKB-KW"/>
</dbReference>
<dbReference type="GO" id="GO:0035999">
    <property type="term" value="P:tetrahydrofolate interconversion"/>
    <property type="evidence" value="ECO:0007669"/>
    <property type="project" value="UniProtKB-UniRule"/>
</dbReference>
<dbReference type="CDD" id="cd01080">
    <property type="entry name" value="NAD_bind_m-THF_DH_Cyclohyd"/>
    <property type="match status" value="1"/>
</dbReference>
<dbReference type="FunFam" id="3.40.50.10860:FF:000001">
    <property type="entry name" value="Bifunctional protein FolD"/>
    <property type="match status" value="1"/>
</dbReference>
<dbReference type="FunFam" id="3.40.50.720:FF:000094">
    <property type="entry name" value="Bifunctional protein FolD"/>
    <property type="match status" value="1"/>
</dbReference>
<dbReference type="Gene3D" id="3.40.50.10860">
    <property type="entry name" value="Leucine Dehydrogenase, chain A, domain 1"/>
    <property type="match status" value="1"/>
</dbReference>
<dbReference type="Gene3D" id="3.40.50.720">
    <property type="entry name" value="NAD(P)-binding Rossmann-like Domain"/>
    <property type="match status" value="1"/>
</dbReference>
<dbReference type="HAMAP" id="MF_01576">
    <property type="entry name" value="THF_DHG_CYH"/>
    <property type="match status" value="1"/>
</dbReference>
<dbReference type="InterPro" id="IPR046346">
    <property type="entry name" value="Aminoacid_DH-like_N_sf"/>
</dbReference>
<dbReference type="InterPro" id="IPR036291">
    <property type="entry name" value="NAD(P)-bd_dom_sf"/>
</dbReference>
<dbReference type="InterPro" id="IPR000672">
    <property type="entry name" value="THF_DH/CycHdrlase"/>
</dbReference>
<dbReference type="InterPro" id="IPR020630">
    <property type="entry name" value="THF_DH/CycHdrlase_cat_dom"/>
</dbReference>
<dbReference type="InterPro" id="IPR020867">
    <property type="entry name" value="THF_DH/CycHdrlase_CS"/>
</dbReference>
<dbReference type="InterPro" id="IPR020631">
    <property type="entry name" value="THF_DH/CycHdrlase_NAD-bd_dom"/>
</dbReference>
<dbReference type="NCBIfam" id="NF008058">
    <property type="entry name" value="PRK10792.1"/>
    <property type="match status" value="1"/>
</dbReference>
<dbReference type="NCBIfam" id="NF010767">
    <property type="entry name" value="PRK14170.1"/>
    <property type="match status" value="1"/>
</dbReference>
<dbReference type="NCBIfam" id="NF010783">
    <property type="entry name" value="PRK14186.1"/>
    <property type="match status" value="1"/>
</dbReference>
<dbReference type="NCBIfam" id="NF010785">
    <property type="entry name" value="PRK14188.1"/>
    <property type="match status" value="1"/>
</dbReference>
<dbReference type="PANTHER" id="PTHR48099:SF5">
    <property type="entry name" value="C-1-TETRAHYDROFOLATE SYNTHASE, CYTOPLASMIC"/>
    <property type="match status" value="1"/>
</dbReference>
<dbReference type="PANTHER" id="PTHR48099">
    <property type="entry name" value="C-1-TETRAHYDROFOLATE SYNTHASE, CYTOPLASMIC-RELATED"/>
    <property type="match status" value="1"/>
</dbReference>
<dbReference type="Pfam" id="PF00763">
    <property type="entry name" value="THF_DHG_CYH"/>
    <property type="match status" value="1"/>
</dbReference>
<dbReference type="Pfam" id="PF02882">
    <property type="entry name" value="THF_DHG_CYH_C"/>
    <property type="match status" value="1"/>
</dbReference>
<dbReference type="PRINTS" id="PR00085">
    <property type="entry name" value="THFDHDRGNASE"/>
</dbReference>
<dbReference type="SUPFAM" id="SSF53223">
    <property type="entry name" value="Aminoacid dehydrogenase-like, N-terminal domain"/>
    <property type="match status" value="1"/>
</dbReference>
<dbReference type="SUPFAM" id="SSF51735">
    <property type="entry name" value="NAD(P)-binding Rossmann-fold domains"/>
    <property type="match status" value="1"/>
</dbReference>
<dbReference type="PROSITE" id="PS00766">
    <property type="entry name" value="THF_DHG_CYH_1"/>
    <property type="match status" value="1"/>
</dbReference>
<dbReference type="PROSITE" id="PS00767">
    <property type="entry name" value="THF_DHG_CYH_2"/>
    <property type="match status" value="1"/>
</dbReference>
<comment type="function">
    <text evidence="1">Catalyzes the oxidation of 5,10-methylenetetrahydrofolate to 5,10-methenyltetrahydrofolate and then the hydrolysis of 5,10-methenyltetrahydrofolate to 10-formyltetrahydrofolate.</text>
</comment>
<comment type="catalytic activity">
    <reaction evidence="1">
        <text>(6R)-5,10-methylene-5,6,7,8-tetrahydrofolate + NADP(+) = (6R)-5,10-methenyltetrahydrofolate + NADPH</text>
        <dbReference type="Rhea" id="RHEA:22812"/>
        <dbReference type="ChEBI" id="CHEBI:15636"/>
        <dbReference type="ChEBI" id="CHEBI:57455"/>
        <dbReference type="ChEBI" id="CHEBI:57783"/>
        <dbReference type="ChEBI" id="CHEBI:58349"/>
        <dbReference type="EC" id="1.5.1.5"/>
    </reaction>
</comment>
<comment type="catalytic activity">
    <reaction evidence="1">
        <text>(6R)-5,10-methenyltetrahydrofolate + H2O = (6R)-10-formyltetrahydrofolate + H(+)</text>
        <dbReference type="Rhea" id="RHEA:23700"/>
        <dbReference type="ChEBI" id="CHEBI:15377"/>
        <dbReference type="ChEBI" id="CHEBI:15378"/>
        <dbReference type="ChEBI" id="CHEBI:57455"/>
        <dbReference type="ChEBI" id="CHEBI:195366"/>
        <dbReference type="EC" id="3.5.4.9"/>
    </reaction>
</comment>
<comment type="pathway">
    <text evidence="1">One-carbon metabolism; tetrahydrofolate interconversion.</text>
</comment>
<comment type="subunit">
    <text evidence="1">Homodimer.</text>
</comment>
<comment type="similarity">
    <text evidence="1">Belongs to the tetrahydrofolate dehydrogenase/cyclohydrolase family.</text>
</comment>
<accession>Q92BZ4</accession>
<evidence type="ECO:0000255" key="1">
    <source>
        <dbReference type="HAMAP-Rule" id="MF_01576"/>
    </source>
</evidence>
<reference key="1">
    <citation type="journal article" date="2001" name="Science">
        <title>Comparative genomics of Listeria species.</title>
        <authorList>
            <person name="Glaser P."/>
            <person name="Frangeul L."/>
            <person name="Buchrieser C."/>
            <person name="Rusniok C."/>
            <person name="Amend A."/>
            <person name="Baquero F."/>
            <person name="Berche P."/>
            <person name="Bloecker H."/>
            <person name="Brandt P."/>
            <person name="Chakraborty T."/>
            <person name="Charbit A."/>
            <person name="Chetouani F."/>
            <person name="Couve E."/>
            <person name="de Daruvar A."/>
            <person name="Dehoux P."/>
            <person name="Domann E."/>
            <person name="Dominguez-Bernal G."/>
            <person name="Duchaud E."/>
            <person name="Durant L."/>
            <person name="Dussurget O."/>
            <person name="Entian K.-D."/>
            <person name="Fsihi H."/>
            <person name="Garcia-del Portillo F."/>
            <person name="Garrido P."/>
            <person name="Gautier L."/>
            <person name="Goebel W."/>
            <person name="Gomez-Lopez N."/>
            <person name="Hain T."/>
            <person name="Hauf J."/>
            <person name="Jackson D."/>
            <person name="Jones L.-M."/>
            <person name="Kaerst U."/>
            <person name="Kreft J."/>
            <person name="Kuhn M."/>
            <person name="Kunst F."/>
            <person name="Kurapkat G."/>
            <person name="Madueno E."/>
            <person name="Maitournam A."/>
            <person name="Mata Vicente J."/>
            <person name="Ng E."/>
            <person name="Nedjari H."/>
            <person name="Nordsiek G."/>
            <person name="Novella S."/>
            <person name="de Pablos B."/>
            <person name="Perez-Diaz J.-C."/>
            <person name="Purcell R."/>
            <person name="Remmel B."/>
            <person name="Rose M."/>
            <person name="Schlueter T."/>
            <person name="Simoes N."/>
            <person name="Tierrez A."/>
            <person name="Vazquez-Boland J.-A."/>
            <person name="Voss H."/>
            <person name="Wehland J."/>
            <person name="Cossart P."/>
        </authorList>
    </citation>
    <scope>NUCLEOTIDE SEQUENCE [LARGE SCALE GENOMIC DNA]</scope>
    <source>
        <strain>ATCC BAA-680 / CLIP 11262</strain>
    </source>
</reference>
<protein>
    <recommendedName>
        <fullName evidence="1">Bifunctional protein FolD</fullName>
    </recommendedName>
    <domain>
        <recommendedName>
            <fullName evidence="1">Methylenetetrahydrofolate dehydrogenase</fullName>
            <ecNumber evidence="1">1.5.1.5</ecNumber>
        </recommendedName>
    </domain>
    <domain>
        <recommendedName>
            <fullName evidence="1">Methenyltetrahydrofolate cyclohydrolase</fullName>
            <ecNumber evidence="1">3.5.4.9</ecNumber>
        </recommendedName>
    </domain>
</protein>
<name>FOLD_LISIN</name>
<feature type="chain" id="PRO_0000268388" description="Bifunctional protein FolD">
    <location>
        <begin position="1"/>
        <end position="284"/>
    </location>
</feature>
<feature type="binding site" evidence="1">
    <location>
        <begin position="164"/>
        <end position="166"/>
    </location>
    <ligand>
        <name>NADP(+)</name>
        <dbReference type="ChEBI" id="CHEBI:58349"/>
    </ligand>
</feature>
<feature type="binding site" evidence="1">
    <location>
        <position position="189"/>
    </location>
    <ligand>
        <name>NADP(+)</name>
        <dbReference type="ChEBI" id="CHEBI:58349"/>
    </ligand>
</feature>
<proteinExistence type="inferred from homology"/>
<sequence length="284" mass="30863">MGEIIDGKKLAKEIQEKVTSEVAELVKQGKKPGLAVVLVGDNQASRTYVRNKQKRTEEAGMKSVLIELPETVTEEKLLKVVEELNEDNTIHGILVQLPLPKHISEEKVIDAISFDKDVDGFHPVNVGNLFIGKDSFVPCTPAGIIELIKSTGTQIEGKRAVVIGRSNIVGKPVAQLLLNENATVTIAHSRTKDLPQVAKEADILVVATGLAKFVKKEYIKPGAIVIDVGMDRDENNKLCGDVDFDDVKEQAGFITPVPGGVGPMTITMLLANTLKAAKRIWKMN</sequence>
<keyword id="KW-0028">Amino-acid biosynthesis</keyword>
<keyword id="KW-0368">Histidine biosynthesis</keyword>
<keyword id="KW-0378">Hydrolase</keyword>
<keyword id="KW-0486">Methionine biosynthesis</keyword>
<keyword id="KW-0511">Multifunctional enzyme</keyword>
<keyword id="KW-0521">NADP</keyword>
<keyword id="KW-0554">One-carbon metabolism</keyword>
<keyword id="KW-0560">Oxidoreductase</keyword>
<keyword id="KW-0658">Purine biosynthesis</keyword>
<gene>
    <name evidence="1" type="primary">folD</name>
    <name type="ordered locus">lin1397</name>
</gene>